<dbReference type="EC" id="1.3.7.7" evidence="1"/>
<dbReference type="EMBL" id="CP001097">
    <property type="protein sequence ID" value="ACD91217.1"/>
    <property type="molecule type" value="Genomic_DNA"/>
</dbReference>
<dbReference type="RefSeq" id="WP_012467085.1">
    <property type="nucleotide sequence ID" value="NC_010803.1"/>
</dbReference>
<dbReference type="SMR" id="B3EGV4"/>
<dbReference type="STRING" id="290315.Clim_2193"/>
<dbReference type="KEGG" id="cli:Clim_2193"/>
<dbReference type="eggNOG" id="COG2710">
    <property type="taxonomic scope" value="Bacteria"/>
</dbReference>
<dbReference type="HOGENOM" id="CLU_025470_0_0_10"/>
<dbReference type="OrthoDB" id="5717231at2"/>
<dbReference type="UniPathway" id="UPA00671"/>
<dbReference type="Proteomes" id="UP000008841">
    <property type="component" value="Chromosome"/>
</dbReference>
<dbReference type="GO" id="GO:0051539">
    <property type="term" value="F:4 iron, 4 sulfur cluster binding"/>
    <property type="evidence" value="ECO:0007669"/>
    <property type="project" value="UniProtKB-UniRule"/>
</dbReference>
<dbReference type="GO" id="GO:0005524">
    <property type="term" value="F:ATP binding"/>
    <property type="evidence" value="ECO:0007669"/>
    <property type="project" value="UniProtKB-UniRule"/>
</dbReference>
<dbReference type="GO" id="GO:0046872">
    <property type="term" value="F:metal ion binding"/>
    <property type="evidence" value="ECO:0007669"/>
    <property type="project" value="UniProtKB-KW"/>
</dbReference>
<dbReference type="GO" id="GO:0016730">
    <property type="term" value="F:oxidoreductase activity, acting on iron-sulfur proteins as donors"/>
    <property type="evidence" value="ECO:0007669"/>
    <property type="project" value="InterPro"/>
</dbReference>
<dbReference type="GO" id="GO:0016636">
    <property type="term" value="F:oxidoreductase activity, acting on the CH-CH group of donors, iron-sulfur protein as acceptor"/>
    <property type="evidence" value="ECO:0007669"/>
    <property type="project" value="UniProtKB-UniRule"/>
</dbReference>
<dbReference type="GO" id="GO:0036070">
    <property type="term" value="P:light-independent bacteriochlorophyll biosynthetic process"/>
    <property type="evidence" value="ECO:0007669"/>
    <property type="project" value="UniProtKB-UniRule"/>
</dbReference>
<dbReference type="GO" id="GO:0019685">
    <property type="term" value="P:photosynthesis, dark reaction"/>
    <property type="evidence" value="ECO:0007669"/>
    <property type="project" value="InterPro"/>
</dbReference>
<dbReference type="Gene3D" id="1.20.89.20">
    <property type="match status" value="1"/>
</dbReference>
<dbReference type="Gene3D" id="3.40.50.1980">
    <property type="entry name" value="Nitrogenase molybdenum iron protein domain"/>
    <property type="match status" value="3"/>
</dbReference>
<dbReference type="Gene3D" id="1.10.8.550">
    <property type="entry name" value="Proto-chlorophyllide reductase 57 kD subunit B"/>
    <property type="match status" value="1"/>
</dbReference>
<dbReference type="HAMAP" id="MF_00353">
    <property type="entry name" value="ChlB_BchB"/>
    <property type="match status" value="1"/>
</dbReference>
<dbReference type="InterPro" id="IPR050152">
    <property type="entry name" value="ChlB/BchB/BchZ"/>
</dbReference>
<dbReference type="InterPro" id="IPR013580">
    <property type="entry name" value="LI-POR_suB-like_C"/>
</dbReference>
<dbReference type="InterPro" id="IPR000510">
    <property type="entry name" value="Nase/OxRdtase_comp1"/>
</dbReference>
<dbReference type="InterPro" id="IPR042298">
    <property type="entry name" value="P-CP_red_C"/>
</dbReference>
<dbReference type="InterPro" id="IPR005969">
    <property type="entry name" value="Protochl_reductB"/>
</dbReference>
<dbReference type="InterPro" id="IPR016209">
    <property type="entry name" value="Protochlorophyllide_Rdtase"/>
</dbReference>
<dbReference type="NCBIfam" id="TIGR01278">
    <property type="entry name" value="DPOR_BchB"/>
    <property type="match status" value="1"/>
</dbReference>
<dbReference type="NCBIfam" id="NF002789">
    <property type="entry name" value="PRK02910.1-3"/>
    <property type="match status" value="1"/>
</dbReference>
<dbReference type="PANTHER" id="PTHR33712">
    <property type="entry name" value="LIGHT-INDEPENDENT PROTOCHLOROPHYLLIDE REDUCTASE SUBUNIT B"/>
    <property type="match status" value="1"/>
</dbReference>
<dbReference type="PANTHER" id="PTHR33712:SF7">
    <property type="entry name" value="LIGHT-INDEPENDENT PROTOCHLOROPHYLLIDE REDUCTASE SUBUNIT B"/>
    <property type="match status" value="1"/>
</dbReference>
<dbReference type="Pfam" id="PF00148">
    <property type="entry name" value="Oxidored_nitro"/>
    <property type="match status" value="1"/>
</dbReference>
<dbReference type="Pfam" id="PF08369">
    <property type="entry name" value="PCP_red"/>
    <property type="match status" value="1"/>
</dbReference>
<dbReference type="PIRSF" id="PIRSF000163">
    <property type="entry name" value="PCP_ChlB"/>
    <property type="match status" value="1"/>
</dbReference>
<dbReference type="SUPFAM" id="SSF53807">
    <property type="entry name" value="Helical backbone' metal receptor"/>
    <property type="match status" value="1"/>
</dbReference>
<organism>
    <name type="scientific">Chlorobium limicola (strain DSM 245 / NBRC 103803 / 6330)</name>
    <dbReference type="NCBI Taxonomy" id="290315"/>
    <lineage>
        <taxon>Bacteria</taxon>
        <taxon>Pseudomonadati</taxon>
        <taxon>Chlorobiota</taxon>
        <taxon>Chlorobiia</taxon>
        <taxon>Chlorobiales</taxon>
        <taxon>Chlorobiaceae</taxon>
        <taxon>Chlorobium/Pelodictyon group</taxon>
        <taxon>Chlorobium</taxon>
    </lineage>
</organism>
<evidence type="ECO:0000255" key="1">
    <source>
        <dbReference type="HAMAP-Rule" id="MF_00353"/>
    </source>
</evidence>
<evidence type="ECO:0000256" key="2">
    <source>
        <dbReference type="SAM" id="MobiDB-lite"/>
    </source>
</evidence>
<feature type="chain" id="PRO_1000120523" description="Light-independent protochlorophyllide reductase subunit B">
    <location>
        <begin position="1"/>
        <end position="535"/>
    </location>
</feature>
<feature type="region of interest" description="Disordered" evidence="2">
    <location>
        <begin position="446"/>
        <end position="483"/>
    </location>
</feature>
<feature type="active site" description="Proton donor" evidence="1">
    <location>
        <position position="292"/>
    </location>
</feature>
<feature type="binding site" evidence="1">
    <location>
        <position position="36"/>
    </location>
    <ligand>
        <name>[4Fe-4S] cluster</name>
        <dbReference type="ChEBI" id="CHEBI:49883"/>
        <note>ligand shared with heterodimeric partner</note>
    </ligand>
</feature>
<feature type="binding site" evidence="1">
    <location>
        <begin position="428"/>
        <end position="429"/>
    </location>
    <ligand>
        <name>substrate</name>
    </ligand>
</feature>
<comment type="function">
    <text evidence="1">Component of the dark-operative protochlorophyllide reductase (DPOR) that uses Mg-ATP and reduced ferredoxin to reduce ring D of protochlorophyllide (Pchlide) to form chlorophyllide a (Chlide). This reaction is light-independent. The NB-protein (BchN-BchB) is the catalytic component of the complex.</text>
</comment>
<comment type="catalytic activity">
    <reaction evidence="1">
        <text>chlorophyllide a + oxidized 2[4Fe-4S]-[ferredoxin] + 2 ADP + 2 phosphate = protochlorophyllide a + reduced 2[4Fe-4S]-[ferredoxin] + 2 ATP + 2 H2O</text>
        <dbReference type="Rhea" id="RHEA:28202"/>
        <dbReference type="Rhea" id="RHEA-COMP:10002"/>
        <dbReference type="Rhea" id="RHEA-COMP:10004"/>
        <dbReference type="ChEBI" id="CHEBI:15377"/>
        <dbReference type="ChEBI" id="CHEBI:30616"/>
        <dbReference type="ChEBI" id="CHEBI:33722"/>
        <dbReference type="ChEBI" id="CHEBI:33723"/>
        <dbReference type="ChEBI" id="CHEBI:43474"/>
        <dbReference type="ChEBI" id="CHEBI:83348"/>
        <dbReference type="ChEBI" id="CHEBI:83350"/>
        <dbReference type="ChEBI" id="CHEBI:456216"/>
        <dbReference type="EC" id="1.3.7.7"/>
    </reaction>
</comment>
<comment type="cofactor">
    <cofactor evidence="1">
        <name>[4Fe-4S] cluster</name>
        <dbReference type="ChEBI" id="CHEBI:49883"/>
    </cofactor>
    <text evidence="1">Binds 1 [4Fe-4S] cluster per heterodimer. The cluster is bound at the heterodimer interface by residues from both subunits.</text>
</comment>
<comment type="pathway">
    <text evidence="1">Porphyrin-containing compound metabolism; bacteriochlorophyll biosynthesis (light-independent).</text>
</comment>
<comment type="subunit">
    <text evidence="1">Protochlorophyllide reductase is composed of three subunits; BchL, BchN and BchB. Forms a heterotetramer of two BchB and two BchN subunits.</text>
</comment>
<comment type="similarity">
    <text evidence="1">Belongs to the ChlB/BchB/BchZ family.</text>
</comment>
<protein>
    <recommendedName>
        <fullName evidence="1">Light-independent protochlorophyllide reductase subunit B</fullName>
        <shortName evidence="1">DPOR subunit B</shortName>
        <shortName evidence="1">LI-POR subunit B</shortName>
        <ecNumber evidence="1">1.3.7.7</ecNumber>
    </recommendedName>
</protein>
<accession>B3EGV4</accession>
<reference key="1">
    <citation type="submission" date="2008-05" db="EMBL/GenBank/DDBJ databases">
        <title>Complete sequence of Chlorobium limicola DSM 245.</title>
        <authorList>
            <consortium name="US DOE Joint Genome Institute"/>
            <person name="Lucas S."/>
            <person name="Copeland A."/>
            <person name="Lapidus A."/>
            <person name="Glavina del Rio T."/>
            <person name="Dalin E."/>
            <person name="Tice H."/>
            <person name="Bruce D."/>
            <person name="Goodwin L."/>
            <person name="Pitluck S."/>
            <person name="Schmutz J."/>
            <person name="Larimer F."/>
            <person name="Land M."/>
            <person name="Hauser L."/>
            <person name="Kyrpides N."/>
            <person name="Ovchinnikova G."/>
            <person name="Zhao F."/>
            <person name="Li T."/>
            <person name="Liu Z."/>
            <person name="Overmann J."/>
            <person name="Bryant D.A."/>
            <person name="Richardson P."/>
        </authorList>
    </citation>
    <scope>NUCLEOTIDE SEQUENCE [LARGE SCALE GENOMIC DNA]</scope>
    <source>
        <strain>DSM 245 / NBRC 103803 / 6330</strain>
    </source>
</reference>
<name>BCHB_CHLL2</name>
<sequence>MRLAFWLYEGTALHGISRITNSMKGVHTVYHAPQGDDYITATYSMLERTPDFPGLSISVVRGRDLAQGVSRLPGTLQQVAHHYSPDLTVIAPSCSTALLQEDLHQLAAHSGVPEEKLLVYALNPFRVSENEAADGLFFELVKRFAVAQEKTPRPSVNLLGFTSLGFHLRANLTSLRRMLQTLGVSVNVVAPWGAGIEDLRKLPAAWLNIAPYREIGETAAGYLGETFGMPAIHEAPIGVEPTLAWLRSVIEKINAVGVEQGVPPIGMPKLNAFSLDGMSAPSGVPWFARTADMESFSNKRAFVFGDATHTVSIVKFLRDELGMKIIGAGTYMHRHADFVRRELEGYLSGELLVTDKFQDVSKVIEDEMPDLVCGTQMERHSCRKLDVPCMVICPPTHIENHLLGYYPFFGFDGADVIADRVYLSCKLGLEKHLIDFFGDAGLEYEDEASPSESAPHASNGHEDVAGGSTAQSVPSHAATEGDGMSWTDEAENMLKKVPFFVRKKVRKNTENFAREQGETTVTADVFRQAKESLGG</sequence>
<keyword id="KW-0004">4Fe-4S</keyword>
<keyword id="KW-0067">ATP-binding</keyword>
<keyword id="KW-0077">Bacteriochlorophyll biosynthesis</keyword>
<keyword id="KW-0149">Chlorophyll biosynthesis</keyword>
<keyword id="KW-0408">Iron</keyword>
<keyword id="KW-0411">Iron-sulfur</keyword>
<keyword id="KW-0479">Metal-binding</keyword>
<keyword id="KW-0547">Nucleotide-binding</keyword>
<keyword id="KW-0560">Oxidoreductase</keyword>
<keyword id="KW-0602">Photosynthesis</keyword>
<gene>
    <name evidence="1" type="primary">bchB</name>
    <name type="ordered locus">Clim_2193</name>
</gene>
<proteinExistence type="inferred from homology"/>